<name>SPEF2_RAT</name>
<gene>
    <name type="primary">Spef2</name>
    <name type="synonym">Kpl2</name>
</gene>
<feature type="chain" id="PRO_0000299032" description="Sperm flagellar protein 2">
    <location>
        <begin position="1"/>
        <end position="1801"/>
    </location>
</feature>
<feature type="domain" description="Calponin-homology (CH)" evidence="4">
    <location>
        <begin position="1"/>
        <end position="105"/>
    </location>
</feature>
<feature type="region of interest" description="Disordered" evidence="5">
    <location>
        <begin position="632"/>
        <end position="659"/>
    </location>
</feature>
<feature type="region of interest" description="Disordered" evidence="5">
    <location>
        <begin position="883"/>
        <end position="949"/>
    </location>
</feature>
<feature type="region of interest" description="Disordered" evidence="5">
    <location>
        <begin position="1233"/>
        <end position="1304"/>
    </location>
</feature>
<feature type="region of interest" description="Interaction with IFT20" evidence="2">
    <location>
        <begin position="1305"/>
        <end position="1657"/>
    </location>
</feature>
<feature type="region of interest" description="Disordered" evidence="5">
    <location>
        <begin position="1651"/>
        <end position="1695"/>
    </location>
</feature>
<feature type="region of interest" description="Disordered" evidence="5">
    <location>
        <begin position="1781"/>
        <end position="1801"/>
    </location>
</feature>
<feature type="coiled-coil region" evidence="3">
    <location>
        <begin position="176"/>
        <end position="260"/>
    </location>
</feature>
<feature type="coiled-coil region" evidence="3">
    <location>
        <begin position="321"/>
        <end position="395"/>
    </location>
</feature>
<feature type="coiled-coil region" evidence="3">
    <location>
        <begin position="722"/>
        <end position="748"/>
    </location>
</feature>
<feature type="coiled-coil region" evidence="3">
    <location>
        <begin position="869"/>
        <end position="895"/>
    </location>
</feature>
<feature type="coiled-coil region" evidence="3">
    <location>
        <begin position="1051"/>
        <end position="1077"/>
    </location>
</feature>
<feature type="coiled-coil region" evidence="3">
    <location>
        <begin position="1252"/>
        <end position="1286"/>
    </location>
</feature>
<feature type="coiled-coil region" evidence="3">
    <location>
        <begin position="1665"/>
        <end position="1695"/>
    </location>
</feature>
<feature type="compositionally biased region" description="Basic and acidic residues" evidence="5">
    <location>
        <begin position="883"/>
        <end position="892"/>
    </location>
</feature>
<feature type="compositionally biased region" description="Basic and acidic residues" evidence="5">
    <location>
        <begin position="909"/>
        <end position="918"/>
    </location>
</feature>
<feature type="compositionally biased region" description="Basic and acidic residues" evidence="5">
    <location>
        <begin position="1233"/>
        <end position="1250"/>
    </location>
</feature>
<feature type="compositionally biased region" description="Basic and acidic residues" evidence="5">
    <location>
        <begin position="1261"/>
        <end position="1295"/>
    </location>
</feature>
<feature type="compositionally biased region" description="Basic and acidic residues" evidence="5">
    <location>
        <begin position="1669"/>
        <end position="1687"/>
    </location>
</feature>
<feature type="splice variant" id="VSP_027530" description="In isoform 2." evidence="7">
    <location>
        <begin position="139"/>
        <end position="195"/>
    </location>
</feature>
<feature type="splice variant" id="VSP_027531" description="In isoform 3." evidence="8">
    <original>NMTGEW</original>
    <variation>VQTNME</variation>
    <location>
        <begin position="509"/>
        <end position="514"/>
    </location>
</feature>
<feature type="splice variant" id="VSP_027532" description="In isoform 3." evidence="8">
    <location>
        <begin position="515"/>
        <end position="1801"/>
    </location>
</feature>
<reference key="1">
    <citation type="journal article" date="1999" name="Am. J. Respir. Cell Mol. Biol.">
        <title>Cloning and characterization of KPL2, a novel gene induced during ciliogenesis of tracheal epithelial cells.</title>
        <authorList>
            <person name="Ostrowski L.E."/>
            <person name="Andrews K."/>
            <person name="Potdar P."/>
            <person name="Matsuura H."/>
            <person name="Jetten A."/>
            <person name="Nettesheim P."/>
        </authorList>
    </citation>
    <scope>NUCLEOTIDE SEQUENCE [MRNA] (ISOFORM 2)</scope>
    <scope>TISSUE SPECIFICITY</scope>
    <scope>DEVELOPMENTAL STAGE</scope>
</reference>
<reference key="2">
    <citation type="journal article" date="2004" name="Nature">
        <title>Genome sequence of the Brown Norway rat yields insights into mammalian evolution.</title>
        <authorList>
            <person name="Gibbs R.A."/>
            <person name="Weinstock G.M."/>
            <person name="Metzker M.L."/>
            <person name="Muzny D.M."/>
            <person name="Sodergren E.J."/>
            <person name="Scherer S."/>
            <person name="Scott G."/>
            <person name="Steffen D."/>
            <person name="Worley K.C."/>
            <person name="Burch P.E."/>
            <person name="Okwuonu G."/>
            <person name="Hines S."/>
            <person name="Lewis L."/>
            <person name="Deramo C."/>
            <person name="Delgado O."/>
            <person name="Dugan-Rocha S."/>
            <person name="Miner G."/>
            <person name="Morgan M."/>
            <person name="Hawes A."/>
            <person name="Gill R."/>
            <person name="Holt R.A."/>
            <person name="Adams M.D."/>
            <person name="Amanatides P.G."/>
            <person name="Baden-Tillson H."/>
            <person name="Barnstead M."/>
            <person name="Chin S."/>
            <person name="Evans C.A."/>
            <person name="Ferriera S."/>
            <person name="Fosler C."/>
            <person name="Glodek A."/>
            <person name="Gu Z."/>
            <person name="Jennings D."/>
            <person name="Kraft C.L."/>
            <person name="Nguyen T."/>
            <person name="Pfannkoch C.M."/>
            <person name="Sitter C."/>
            <person name="Sutton G.G."/>
            <person name="Venter J.C."/>
            <person name="Woodage T."/>
            <person name="Smith D."/>
            <person name="Lee H.-M."/>
            <person name="Gustafson E."/>
            <person name="Cahill P."/>
            <person name="Kana A."/>
            <person name="Doucette-Stamm L."/>
            <person name="Weinstock K."/>
            <person name="Fechtel K."/>
            <person name="Weiss R.B."/>
            <person name="Dunn D.M."/>
            <person name="Green E.D."/>
            <person name="Blakesley R.W."/>
            <person name="Bouffard G.G."/>
            <person name="De Jong P.J."/>
            <person name="Osoegawa K."/>
            <person name="Zhu B."/>
            <person name="Marra M."/>
            <person name="Schein J."/>
            <person name="Bosdet I."/>
            <person name="Fjell C."/>
            <person name="Jones S."/>
            <person name="Krzywinski M."/>
            <person name="Mathewson C."/>
            <person name="Siddiqui A."/>
            <person name="Wye N."/>
            <person name="McPherson J."/>
            <person name="Zhao S."/>
            <person name="Fraser C.M."/>
            <person name="Shetty J."/>
            <person name="Shatsman S."/>
            <person name="Geer K."/>
            <person name="Chen Y."/>
            <person name="Abramzon S."/>
            <person name="Nierman W.C."/>
            <person name="Havlak P.H."/>
            <person name="Chen R."/>
            <person name="Durbin K.J."/>
            <person name="Egan A."/>
            <person name="Ren Y."/>
            <person name="Song X.-Z."/>
            <person name="Li B."/>
            <person name="Liu Y."/>
            <person name="Qin X."/>
            <person name="Cawley S."/>
            <person name="Cooney A.J."/>
            <person name="D'Souza L.M."/>
            <person name="Martin K."/>
            <person name="Wu J.Q."/>
            <person name="Gonzalez-Garay M.L."/>
            <person name="Jackson A.R."/>
            <person name="Kalafus K.J."/>
            <person name="McLeod M.P."/>
            <person name="Milosavljevic A."/>
            <person name="Virk D."/>
            <person name="Volkov A."/>
            <person name="Wheeler D.A."/>
            <person name="Zhang Z."/>
            <person name="Bailey J.A."/>
            <person name="Eichler E.E."/>
            <person name="Tuzun E."/>
            <person name="Birney E."/>
            <person name="Mongin E."/>
            <person name="Ureta-Vidal A."/>
            <person name="Woodwark C."/>
            <person name="Zdobnov E."/>
            <person name="Bork P."/>
            <person name="Suyama M."/>
            <person name="Torrents D."/>
            <person name="Alexandersson M."/>
            <person name="Trask B.J."/>
            <person name="Young J.M."/>
            <person name="Huang H."/>
            <person name="Wang H."/>
            <person name="Xing H."/>
            <person name="Daniels S."/>
            <person name="Gietzen D."/>
            <person name="Schmidt J."/>
            <person name="Stevens K."/>
            <person name="Vitt U."/>
            <person name="Wingrove J."/>
            <person name="Camara F."/>
            <person name="Mar Alba M."/>
            <person name="Abril J.F."/>
            <person name="Guigo R."/>
            <person name="Smit A."/>
            <person name="Dubchak I."/>
            <person name="Rubin E.M."/>
            <person name="Couronne O."/>
            <person name="Poliakov A."/>
            <person name="Huebner N."/>
            <person name="Ganten D."/>
            <person name="Goesele C."/>
            <person name="Hummel O."/>
            <person name="Kreitler T."/>
            <person name="Lee Y.-A."/>
            <person name="Monti J."/>
            <person name="Schulz H."/>
            <person name="Zimdahl H."/>
            <person name="Himmelbauer H."/>
            <person name="Lehrach H."/>
            <person name="Jacob H.J."/>
            <person name="Bromberg S."/>
            <person name="Gullings-Handley J."/>
            <person name="Jensen-Seaman M.I."/>
            <person name="Kwitek A.E."/>
            <person name="Lazar J."/>
            <person name="Pasko D."/>
            <person name="Tonellato P.J."/>
            <person name="Twigger S."/>
            <person name="Ponting C.P."/>
            <person name="Duarte J.M."/>
            <person name="Rice S."/>
            <person name="Goodstadt L."/>
            <person name="Beatson S.A."/>
            <person name="Emes R.D."/>
            <person name="Winter E.E."/>
            <person name="Webber C."/>
            <person name="Brandt P."/>
            <person name="Nyakatura G."/>
            <person name="Adetobi M."/>
            <person name="Chiaromonte F."/>
            <person name="Elnitski L."/>
            <person name="Eswara P."/>
            <person name="Hardison R.C."/>
            <person name="Hou M."/>
            <person name="Kolbe D."/>
            <person name="Makova K."/>
            <person name="Miller W."/>
            <person name="Nekrutenko A."/>
            <person name="Riemer C."/>
            <person name="Schwartz S."/>
            <person name="Taylor J."/>
            <person name="Yang S."/>
            <person name="Zhang Y."/>
            <person name="Lindpaintner K."/>
            <person name="Andrews T.D."/>
            <person name="Caccamo M."/>
            <person name="Clamp M."/>
            <person name="Clarke L."/>
            <person name="Curwen V."/>
            <person name="Durbin R.M."/>
            <person name="Eyras E."/>
            <person name="Searle S.M."/>
            <person name="Cooper G.M."/>
            <person name="Batzoglou S."/>
            <person name="Brudno M."/>
            <person name="Sidow A."/>
            <person name="Stone E.A."/>
            <person name="Payseur B.A."/>
            <person name="Bourque G."/>
            <person name="Lopez-Otin C."/>
            <person name="Puente X.S."/>
            <person name="Chakrabarti K."/>
            <person name="Chatterji S."/>
            <person name="Dewey C."/>
            <person name="Pachter L."/>
            <person name="Bray N."/>
            <person name="Yap V.B."/>
            <person name="Caspi A."/>
            <person name="Tesler G."/>
            <person name="Pevzner P.A."/>
            <person name="Haussler D."/>
            <person name="Roskin K.M."/>
            <person name="Baertsch R."/>
            <person name="Clawson H."/>
            <person name="Furey T.S."/>
            <person name="Hinrichs A.S."/>
            <person name="Karolchik D."/>
            <person name="Kent W.J."/>
            <person name="Rosenbloom K.R."/>
            <person name="Trumbower H."/>
            <person name="Weirauch M."/>
            <person name="Cooper D.N."/>
            <person name="Stenson P.D."/>
            <person name="Ma B."/>
            <person name="Brent M."/>
            <person name="Arumugam M."/>
            <person name="Shteynberg D."/>
            <person name="Copley R.R."/>
            <person name="Taylor M.S."/>
            <person name="Riethman H."/>
            <person name="Mudunuri U."/>
            <person name="Peterson J."/>
            <person name="Guyer M."/>
            <person name="Felsenfeld A."/>
            <person name="Old S."/>
            <person name="Mockrin S."/>
            <person name="Collins F.S."/>
        </authorList>
    </citation>
    <scope>NUCLEOTIDE SEQUENCE [LARGE SCALE GENOMIC DNA]</scope>
    <source>
        <strain>Brown Norway</strain>
    </source>
</reference>
<reference key="3">
    <citation type="journal article" date="2004" name="Genome Res.">
        <title>The status, quality, and expansion of the NIH full-length cDNA project: the Mammalian Gene Collection (MGC).</title>
        <authorList>
            <consortium name="The MGC Project Team"/>
        </authorList>
    </citation>
    <scope>NUCLEOTIDE SEQUENCE [LARGE SCALE MRNA] (ISOFORM 3)</scope>
    <source>
        <tissue>Testis</tissue>
    </source>
</reference>
<reference key="4">
    <citation type="journal article" date="2012" name="Nat. Commun.">
        <title>Quantitative maps of protein phosphorylation sites across 14 different rat organs and tissues.</title>
        <authorList>
            <person name="Lundby A."/>
            <person name="Secher A."/>
            <person name="Lage K."/>
            <person name="Nordsborg N.B."/>
            <person name="Dmytriyev A."/>
            <person name="Lundby C."/>
            <person name="Olsen J.V."/>
        </authorList>
    </citation>
    <scope>IDENTIFICATION BY MASS SPECTROMETRY [LARGE SCALE ANALYSIS]</scope>
</reference>
<comment type="function">
    <text evidence="1">Required for correct axoneme development in spermatozoa. Important for normal development of the manchette and sperm head morphology. Essential for male fertility. Plays a role in localization of the intraflagellar transport protein IFT20 to the manchette, suggesting function as an adapter for dynein-mediated protein transport during spermatogenesis. Also plays a role in bone growth where it seems to be required for normal osteoblast differentiation.</text>
</comment>
<comment type="subunit">
    <text evidence="1">Interacts (via C-terminus) with IFT20. Interacts with DYNC1I2.</text>
</comment>
<comment type="subcellular location">
    <subcellularLocation>
        <location evidence="2">Cell projection</location>
        <location evidence="2">Cilium</location>
        <location evidence="2">Flagellum</location>
    </subcellularLocation>
    <subcellularLocation>
        <location evidence="1">Cytoplasm</location>
    </subcellularLocation>
    <subcellularLocation>
        <location evidence="1">Golgi apparatus</location>
    </subcellularLocation>
    <text evidence="1">Shows dynamic localization in developing spermatozoa. Localizes to the manchette in step 10-12 elongating spermatids. Detected in the basal body and neck area of step 13-14 spermatids. Localizes to the midpiece of the sperm tail in step 15-16 spermatids. During the epididymal transport of spermatozoa, expression in the sperm tail reduces and becomes concentrated at the distal part of the midpiece. Detected in the Golgi apparatus of late spermatocytes and round spermatids. Detected in the cytoplasm of Sertoli cells.</text>
</comment>
<comment type="alternative products">
    <event type="alternative splicing"/>
    <isoform>
        <id>Q9R095-1</id>
        <name>1</name>
        <sequence type="displayed"/>
    </isoform>
    <isoform>
        <id>Q9R095-2</id>
        <name>2</name>
        <sequence type="described" ref="VSP_027530"/>
    </isoform>
    <isoform>
        <id>Q9R095-3</id>
        <name>3</name>
        <sequence type="described" ref="VSP_027531 VSP_027532"/>
    </isoform>
</comment>
<comment type="tissue specificity">
    <text evidence="6">Predominantly expressed in ciliated tissues such as lung, trachea, testis, brain, and at lower levels in kidney and spleen.</text>
</comment>
<comment type="developmental stage">
    <text evidence="6">Expressed during the process of ciliated cell differentiation. In seminiferous tubules of the testis, its expression is stage-specific and is highest in spermatocytes and round spermatids.</text>
</comment>
<dbReference type="EMBL" id="AF102129">
    <property type="protein sequence ID" value="AAD56310.1"/>
    <property type="molecule type" value="mRNA"/>
</dbReference>
<dbReference type="EMBL" id="AABR03012106">
    <property type="status" value="NOT_ANNOTATED_CDS"/>
    <property type="molecule type" value="Genomic_DNA"/>
</dbReference>
<dbReference type="EMBL" id="BC097318">
    <property type="protein sequence ID" value="AAH97318.1"/>
    <property type="molecule type" value="mRNA"/>
</dbReference>
<dbReference type="RefSeq" id="NP_001401938.1">
    <molecule id="Q9R095-3"/>
    <property type="nucleotide sequence ID" value="NM_001415009.1"/>
</dbReference>
<dbReference type="RefSeq" id="NP_072142.1">
    <property type="nucleotide sequence ID" value="NM_022620.1"/>
</dbReference>
<dbReference type="RefSeq" id="XP_017446581.1">
    <property type="nucleotide sequence ID" value="XM_017591092.1"/>
</dbReference>
<dbReference type="SMR" id="Q9R095"/>
<dbReference type="FunCoup" id="Q9R095">
    <property type="interactions" value="494"/>
</dbReference>
<dbReference type="STRING" id="10116.ENSRNOP00000070321"/>
<dbReference type="GlyGen" id="Q9R095">
    <property type="glycosylation" value="3 sites"/>
</dbReference>
<dbReference type="PhosphoSitePlus" id="Q9R095"/>
<dbReference type="PaxDb" id="10116-ENSRNOP00000056749"/>
<dbReference type="GeneID" id="64555"/>
<dbReference type="KEGG" id="rno:64555"/>
<dbReference type="AGR" id="RGD:620450"/>
<dbReference type="CTD" id="79925"/>
<dbReference type="RGD" id="620450">
    <property type="gene designation" value="Spef2"/>
</dbReference>
<dbReference type="eggNOG" id="ENOG502QR7Y">
    <property type="taxonomic scope" value="Eukaryota"/>
</dbReference>
<dbReference type="InParanoid" id="Q9R095"/>
<dbReference type="PhylomeDB" id="Q9R095"/>
<dbReference type="PRO" id="PR:Q9R095"/>
<dbReference type="Proteomes" id="UP000002494">
    <property type="component" value="Chromosome 2"/>
</dbReference>
<dbReference type="Bgee" id="ENSRNOG00000058275">
    <property type="expression patterns" value="Expressed in testis and 4 other cell types or tissues"/>
</dbReference>
<dbReference type="ExpressionAtlas" id="Q9R095">
    <property type="expression patterns" value="baseline and differential"/>
</dbReference>
<dbReference type="GO" id="GO:0005737">
    <property type="term" value="C:cytoplasm"/>
    <property type="evidence" value="ECO:0000266"/>
    <property type="project" value="RGD"/>
</dbReference>
<dbReference type="GO" id="GO:0005576">
    <property type="term" value="C:extracellular region"/>
    <property type="evidence" value="ECO:0007669"/>
    <property type="project" value="GOC"/>
</dbReference>
<dbReference type="GO" id="GO:0005794">
    <property type="term" value="C:Golgi apparatus"/>
    <property type="evidence" value="ECO:0000266"/>
    <property type="project" value="RGD"/>
</dbReference>
<dbReference type="GO" id="GO:0002177">
    <property type="term" value="C:manchette"/>
    <property type="evidence" value="ECO:0000266"/>
    <property type="project" value="RGD"/>
</dbReference>
<dbReference type="GO" id="GO:0036126">
    <property type="term" value="C:sperm flagellum"/>
    <property type="evidence" value="ECO:0000250"/>
    <property type="project" value="UniProtKB"/>
</dbReference>
<dbReference type="GO" id="GO:0097225">
    <property type="term" value="C:sperm midpiece"/>
    <property type="evidence" value="ECO:0000266"/>
    <property type="project" value="RGD"/>
</dbReference>
<dbReference type="GO" id="GO:0048854">
    <property type="term" value="P:brain morphogenesis"/>
    <property type="evidence" value="ECO:0000266"/>
    <property type="project" value="RGD"/>
</dbReference>
<dbReference type="GO" id="GO:0090660">
    <property type="term" value="P:cerebrospinal fluid circulation"/>
    <property type="evidence" value="ECO:0000266"/>
    <property type="project" value="RGD"/>
</dbReference>
<dbReference type="GO" id="GO:0003351">
    <property type="term" value="P:epithelial cilium movement involved in extracellular fluid movement"/>
    <property type="evidence" value="ECO:0000266"/>
    <property type="project" value="RGD"/>
</dbReference>
<dbReference type="GO" id="GO:0051649">
    <property type="term" value="P:establishment of localization in cell"/>
    <property type="evidence" value="ECO:0000266"/>
    <property type="project" value="RGD"/>
</dbReference>
<dbReference type="GO" id="GO:0120197">
    <property type="term" value="P:mucociliary clearance"/>
    <property type="evidence" value="ECO:0000266"/>
    <property type="project" value="RGD"/>
</dbReference>
<dbReference type="GO" id="GO:0060541">
    <property type="term" value="P:respiratory system development"/>
    <property type="evidence" value="ECO:0000266"/>
    <property type="project" value="RGD"/>
</dbReference>
<dbReference type="GO" id="GO:0048705">
    <property type="term" value="P:skeletal system morphogenesis"/>
    <property type="evidence" value="ECO:0000266"/>
    <property type="project" value="RGD"/>
</dbReference>
<dbReference type="GO" id="GO:0007288">
    <property type="term" value="P:sperm axoneme assembly"/>
    <property type="evidence" value="ECO:0000250"/>
    <property type="project" value="UniProtKB"/>
</dbReference>
<dbReference type="GO" id="GO:0120316">
    <property type="term" value="P:sperm flagellum assembly"/>
    <property type="evidence" value="ECO:0000266"/>
    <property type="project" value="RGD"/>
</dbReference>
<dbReference type="GO" id="GO:0007283">
    <property type="term" value="P:spermatogenesis"/>
    <property type="evidence" value="ECO:0000266"/>
    <property type="project" value="RGD"/>
</dbReference>
<dbReference type="Gene3D" id="1.10.418.10">
    <property type="entry name" value="Calponin-like domain"/>
    <property type="match status" value="1"/>
</dbReference>
<dbReference type="Gene3D" id="3.40.50.300">
    <property type="entry name" value="P-loop containing nucleotide triphosphate hydrolases"/>
    <property type="match status" value="1"/>
</dbReference>
<dbReference type="InterPro" id="IPR010441">
    <property type="entry name" value="CH_2"/>
</dbReference>
<dbReference type="InterPro" id="IPR001715">
    <property type="entry name" value="CH_dom"/>
</dbReference>
<dbReference type="InterPro" id="IPR036872">
    <property type="entry name" value="CH_dom_sf"/>
</dbReference>
<dbReference type="InterPro" id="IPR027417">
    <property type="entry name" value="P-loop_NTPase"/>
</dbReference>
<dbReference type="InterPro" id="IPR056199">
    <property type="entry name" value="SPEF2_C"/>
</dbReference>
<dbReference type="InterPro" id="IPR054517">
    <property type="entry name" value="SPEF2_D5"/>
</dbReference>
<dbReference type="InterPro" id="IPR052634">
    <property type="entry name" value="Sperm_flagellar-bone_growth"/>
</dbReference>
<dbReference type="PANTHER" id="PTHR14919">
    <property type="entry name" value="KPL2-RELATED"/>
    <property type="match status" value="1"/>
</dbReference>
<dbReference type="PANTHER" id="PTHR14919:SF0">
    <property type="entry name" value="SPERM FLAGELLAR PROTEIN 2"/>
    <property type="match status" value="1"/>
</dbReference>
<dbReference type="Pfam" id="PF00406">
    <property type="entry name" value="ADK"/>
    <property type="match status" value="1"/>
</dbReference>
<dbReference type="Pfam" id="PF06294">
    <property type="entry name" value="CH_2"/>
    <property type="match status" value="1"/>
</dbReference>
<dbReference type="Pfam" id="PF24082">
    <property type="entry name" value="SPEF2_C"/>
    <property type="match status" value="1"/>
</dbReference>
<dbReference type="Pfam" id="PF22946">
    <property type="entry name" value="SPEF2_D5"/>
    <property type="match status" value="1"/>
</dbReference>
<dbReference type="SUPFAM" id="SSF52540">
    <property type="entry name" value="P-loop containing nucleoside triphosphate hydrolases"/>
    <property type="match status" value="1"/>
</dbReference>
<dbReference type="PROSITE" id="PS50021">
    <property type="entry name" value="CH"/>
    <property type="match status" value="1"/>
</dbReference>
<organism>
    <name type="scientific">Rattus norvegicus</name>
    <name type="common">Rat</name>
    <dbReference type="NCBI Taxonomy" id="10116"/>
    <lineage>
        <taxon>Eukaryota</taxon>
        <taxon>Metazoa</taxon>
        <taxon>Chordata</taxon>
        <taxon>Craniata</taxon>
        <taxon>Vertebrata</taxon>
        <taxon>Euteleostomi</taxon>
        <taxon>Mammalia</taxon>
        <taxon>Eutheria</taxon>
        <taxon>Euarchontoglires</taxon>
        <taxon>Glires</taxon>
        <taxon>Rodentia</taxon>
        <taxon>Myomorpha</taxon>
        <taxon>Muroidea</taxon>
        <taxon>Muridae</taxon>
        <taxon>Murinae</taxon>
        <taxon>Rattus</taxon>
    </lineage>
</organism>
<keyword id="KW-0025">Alternative splicing</keyword>
<keyword id="KW-0966">Cell projection</keyword>
<keyword id="KW-0969">Cilium</keyword>
<keyword id="KW-0175">Coiled coil</keyword>
<keyword id="KW-0963">Cytoplasm</keyword>
<keyword id="KW-0221">Differentiation</keyword>
<keyword id="KW-0282">Flagellum</keyword>
<keyword id="KW-0333">Golgi apparatus</keyword>
<keyword id="KW-1185">Reference proteome</keyword>
<keyword id="KW-0744">Spermatogenesis</keyword>
<proteinExistence type="evidence at protein level"/>
<accession>Q9R095</accession>
<accession>Q4V8M1</accession>
<protein>
    <recommendedName>
        <fullName>Sperm flagellar protein 2</fullName>
    </recommendedName>
    <alternativeName>
        <fullName>Protein KPL2</fullName>
    </alternativeName>
</protein>
<evidence type="ECO:0000250" key="1">
    <source>
        <dbReference type="UniProtKB" id="Q8C9J3"/>
    </source>
</evidence>
<evidence type="ECO:0000250" key="2">
    <source>
        <dbReference type="UniProtKB" id="Q9C093"/>
    </source>
</evidence>
<evidence type="ECO:0000255" key="3"/>
<evidence type="ECO:0000255" key="4">
    <source>
        <dbReference type="PROSITE-ProRule" id="PRU00044"/>
    </source>
</evidence>
<evidence type="ECO:0000256" key="5">
    <source>
        <dbReference type="SAM" id="MobiDB-lite"/>
    </source>
</evidence>
<evidence type="ECO:0000269" key="6">
    <source>
    </source>
</evidence>
<evidence type="ECO:0000303" key="7">
    <source>
    </source>
</evidence>
<evidence type="ECO:0000303" key="8">
    <source>
    </source>
</evidence>
<sequence>MSEILCQWLNQELKVSRTVSPKSFAKTFSNGYLIGEVLFKFELQSDFSEFSESRVSTAKLNNFSRLQPTLHLLGVQFDQNVAQSIITEKPGAATKLLYQLYIALQKKKKTGLTGLEIQTMQPQTNQRLQALKSEAFRERLKNLIPRQTDFNLMRVTCRFQEKCKQMKEDLARMHFEKFEKIQKLEEEQRHFNIEKQRLNRRRQNEIMAKIQAAIIQIPKPEPNRTLKAIEAQKLMKKKKEAEDVANEIKKFEALIKKDLQTRESISKTSLDTIDQTAAELLNTYSDDDYIKKIQKRLEEDAFAREQREKRRRRLLMDQLIAHEAQEEAYREEQLIHRLMRQSQQERRIAVQLMHVRHEKEVLWQNRIFREKQFEERRLKDFQDALDREAALTKQAKIDFAEQTLRAKEIHEKIAMERAQQRYEKHYGICAEILDQILDLCTKVADYRLLTNNLIPHKMMRDWKELFFSGNPIYEQTSHTHGQTESTEDHHVELNKRNLLDSKDYEDYKNMTGEWALPEDMANSSPPSNNNILGHVLLRLIENSYPSEKEVADTELPSFAVKGCLLGKTLSGKTTILKALQNDIPIQVLSIDTLVQEAIQAFNDGEKSSKAPSMHEDVKGDPEVDQKEMIIPQDKNELTDTQVPGEAAPQKEGTKSSDFEQFRPSNSFLSLSMRAQLGAKSELMLRRGKSVPDVLLVNILVNAIKKIPVNQSWVLDGFPMTVNQAKLLEEALTGYKRKSLQLKKKKAQMPTLALSPTTSKEVPFLPSAFDFAILLDISDNSSLARINDIIAKEISHEISHENVSGPTITSSEEKSEDRNLRDHIQHRIVGFLDNWPLLEEWFTEPRNILKKVNAEIDEAFLCQKIKEIFATEVSNKKIKVEKKLEEKETEKKSAVSPTEPPTPTPPLASEAEKEKEVHQAKPSGKGKTQSVSPKGKAQGGKISVKKSPIDSTEVSPTLIAMPTTKPGSEEWVYVTEPIPEELPSFLVPYWELIEKTYISHIKTVLRQLRESQHTVLSYLYETRTSFQEFLRRPDHKQDFVSQWQADFNSVPEDLWEDEETKAELHQRVNDLRDRLWDICEARKEEAEQERLDIINESWLQDYIGITMNHFFSLMQAEVNRFQDTKRLLQDYYRAMESRIPLEDNKKFTRIPLVQLDGKEISEHQLRIPLVPRISSSPENVSMRPKVKALLKGRFDPPLESLEANFEGDEKIVLDTWQQASLAISQMVAAEVHQRLAEEEKEQPQLDPKEKSPQSGTNKKAKKEKEQAKKEKEQAKKEKEQAKKEKEPPKKKMAEKKGKGKSSPVVEVSPVTITPEEMAEMERKNELKLKIKEEHLAALQTEEQATQFRLELIKSKALSILEDLVTKVIEVYRFMEKWLGKRYLNEMASIQKLTEVARYHIETATKIQNEIYLSQEDFYINGDIKVFPDPPPPTRPPPVEKEENGTLTIEQLDNLRDQFLDMAPKGIIGNKAFTDILLDLVTLNLGTNNLSSSWMHLTQLDLQEITSLLTVNTEFVDWRKFLMVAAMPWPIPLEEELLETLQRFKATDEAQTGTITFEQYKQAGLWFSGDEDIKIPENPLEPLPFNRQEHLIEFFFRLFADSEKDPPQLDYTQMLLYFACHPDTLEGVYRALSVAVGTHIFRQVETPMLTAEKTSISSVSPNEEFPEAEENSTREELKEEKDERDQKEEEIPENANTEKISMETLLKVFGGGNEVLDANRFASYLKTENIYSENLIKTFQDLGAKNLEPIEVNILLKHPYIQDLITNYVDYKIPDIKMILQRSEHAQGSDGERSPSRLTDEKK</sequence>